<comment type="function">
    <text>Cytosolic CRABPs may regulate the access of retinoic acid to the nuclear retinoic acid receptors.</text>
</comment>
<comment type="subcellular location">
    <subcellularLocation>
        <location>Cytoplasm</location>
    </subcellularLocation>
</comment>
<comment type="domain">
    <text>Forms a beta-barrel structure that accommodates hydrophobic ligands in its interior.</text>
</comment>
<comment type="similarity">
    <text evidence="2">Belongs to the calycin superfamily. Fatty-acid binding protein (FABP) family.</text>
</comment>
<gene>
    <name type="primary">Crabp1</name>
</gene>
<accession>P62965</accession>
<accession>P02695</accession>
<accession>P02697</accession>
<accession>P15780</accession>
<accession>Q3UN78</accession>
<reference key="1">
    <citation type="journal article" date="1989" name="Cancer Res.">
        <title>Mouse cellular retinoic acid binding protein: cloning, complementary DNA sequence, and messenger RNA expression during the retinoic acid-induced differentiation of F9 wild type and RA-3-10 mutant teratocarcinoma cells.</title>
        <authorList>
            <person name="Stoner C.M."/>
            <person name="Gudas L.J."/>
        </authorList>
    </citation>
    <scope>NUCLEOTIDE SEQUENCE [MRNA]</scope>
</reference>
<reference key="2">
    <citation type="journal article" date="1990" name="DNA Cell Biol.">
        <title>Molecular cloning and transcriptional mapping of the mouse cellular retinoic acid-binding protein gene.</title>
        <authorList>
            <person name="Wei L.-N."/>
            <person name="Tsao J.L."/>
            <person name="Chu Y.S."/>
            <person name="Jeannotte L."/>
            <person name="Nguyen-Huu M.C."/>
        </authorList>
    </citation>
    <scope>NUCLEOTIDE SEQUENCE [GENOMIC DNA]</scope>
</reference>
<reference key="3">
    <citation type="journal article" date="1989" name="Differentiation">
        <title>Preferential expression of cellular retinoic acid binding protein in a subpopulation of neural cells in the developing mouse embryo.</title>
        <authorList>
            <person name="Vaessen M.J."/>
            <person name="Kootwijk E."/>
            <person name="Mummery C."/>
            <person name="Hilkens J."/>
            <person name="Bootsma D."/>
            <person name="Geurts van Kessel A."/>
        </authorList>
    </citation>
    <scope>NUCLEOTIDE SEQUENCE [MRNA]</scope>
</reference>
<reference key="4">
    <citation type="journal article" date="2005" name="Science">
        <title>The transcriptional landscape of the mammalian genome.</title>
        <authorList>
            <person name="Carninci P."/>
            <person name="Kasukawa T."/>
            <person name="Katayama S."/>
            <person name="Gough J."/>
            <person name="Frith M.C."/>
            <person name="Maeda N."/>
            <person name="Oyama R."/>
            <person name="Ravasi T."/>
            <person name="Lenhard B."/>
            <person name="Wells C."/>
            <person name="Kodzius R."/>
            <person name="Shimokawa K."/>
            <person name="Bajic V.B."/>
            <person name="Brenner S.E."/>
            <person name="Batalov S."/>
            <person name="Forrest A.R."/>
            <person name="Zavolan M."/>
            <person name="Davis M.J."/>
            <person name="Wilming L.G."/>
            <person name="Aidinis V."/>
            <person name="Allen J.E."/>
            <person name="Ambesi-Impiombato A."/>
            <person name="Apweiler R."/>
            <person name="Aturaliya R.N."/>
            <person name="Bailey T.L."/>
            <person name="Bansal M."/>
            <person name="Baxter L."/>
            <person name="Beisel K.W."/>
            <person name="Bersano T."/>
            <person name="Bono H."/>
            <person name="Chalk A.M."/>
            <person name="Chiu K.P."/>
            <person name="Choudhary V."/>
            <person name="Christoffels A."/>
            <person name="Clutterbuck D.R."/>
            <person name="Crowe M.L."/>
            <person name="Dalla E."/>
            <person name="Dalrymple B.P."/>
            <person name="de Bono B."/>
            <person name="Della Gatta G."/>
            <person name="di Bernardo D."/>
            <person name="Down T."/>
            <person name="Engstrom P."/>
            <person name="Fagiolini M."/>
            <person name="Faulkner G."/>
            <person name="Fletcher C.F."/>
            <person name="Fukushima T."/>
            <person name="Furuno M."/>
            <person name="Futaki S."/>
            <person name="Gariboldi M."/>
            <person name="Georgii-Hemming P."/>
            <person name="Gingeras T.R."/>
            <person name="Gojobori T."/>
            <person name="Green R.E."/>
            <person name="Gustincich S."/>
            <person name="Harbers M."/>
            <person name="Hayashi Y."/>
            <person name="Hensch T.K."/>
            <person name="Hirokawa N."/>
            <person name="Hill D."/>
            <person name="Huminiecki L."/>
            <person name="Iacono M."/>
            <person name="Ikeo K."/>
            <person name="Iwama A."/>
            <person name="Ishikawa T."/>
            <person name="Jakt M."/>
            <person name="Kanapin A."/>
            <person name="Katoh M."/>
            <person name="Kawasawa Y."/>
            <person name="Kelso J."/>
            <person name="Kitamura H."/>
            <person name="Kitano H."/>
            <person name="Kollias G."/>
            <person name="Krishnan S.P."/>
            <person name="Kruger A."/>
            <person name="Kummerfeld S.K."/>
            <person name="Kurochkin I.V."/>
            <person name="Lareau L.F."/>
            <person name="Lazarevic D."/>
            <person name="Lipovich L."/>
            <person name="Liu J."/>
            <person name="Liuni S."/>
            <person name="McWilliam S."/>
            <person name="Madan Babu M."/>
            <person name="Madera M."/>
            <person name="Marchionni L."/>
            <person name="Matsuda H."/>
            <person name="Matsuzawa S."/>
            <person name="Miki H."/>
            <person name="Mignone F."/>
            <person name="Miyake S."/>
            <person name="Morris K."/>
            <person name="Mottagui-Tabar S."/>
            <person name="Mulder N."/>
            <person name="Nakano N."/>
            <person name="Nakauchi H."/>
            <person name="Ng P."/>
            <person name="Nilsson R."/>
            <person name="Nishiguchi S."/>
            <person name="Nishikawa S."/>
            <person name="Nori F."/>
            <person name="Ohara O."/>
            <person name="Okazaki Y."/>
            <person name="Orlando V."/>
            <person name="Pang K.C."/>
            <person name="Pavan W.J."/>
            <person name="Pavesi G."/>
            <person name="Pesole G."/>
            <person name="Petrovsky N."/>
            <person name="Piazza S."/>
            <person name="Reed J."/>
            <person name="Reid J.F."/>
            <person name="Ring B.Z."/>
            <person name="Ringwald M."/>
            <person name="Rost B."/>
            <person name="Ruan Y."/>
            <person name="Salzberg S.L."/>
            <person name="Sandelin A."/>
            <person name="Schneider C."/>
            <person name="Schoenbach C."/>
            <person name="Sekiguchi K."/>
            <person name="Semple C.A."/>
            <person name="Seno S."/>
            <person name="Sessa L."/>
            <person name="Sheng Y."/>
            <person name="Shibata Y."/>
            <person name="Shimada H."/>
            <person name="Shimada K."/>
            <person name="Silva D."/>
            <person name="Sinclair B."/>
            <person name="Sperling S."/>
            <person name="Stupka E."/>
            <person name="Sugiura K."/>
            <person name="Sultana R."/>
            <person name="Takenaka Y."/>
            <person name="Taki K."/>
            <person name="Tammoja K."/>
            <person name="Tan S.L."/>
            <person name="Tang S."/>
            <person name="Taylor M.S."/>
            <person name="Tegner J."/>
            <person name="Teichmann S.A."/>
            <person name="Ueda H.R."/>
            <person name="van Nimwegen E."/>
            <person name="Verardo R."/>
            <person name="Wei C.L."/>
            <person name="Yagi K."/>
            <person name="Yamanishi H."/>
            <person name="Zabarovsky E."/>
            <person name="Zhu S."/>
            <person name="Zimmer A."/>
            <person name="Hide W."/>
            <person name="Bult C."/>
            <person name="Grimmond S.M."/>
            <person name="Teasdale R.D."/>
            <person name="Liu E.T."/>
            <person name="Brusic V."/>
            <person name="Quackenbush J."/>
            <person name="Wahlestedt C."/>
            <person name="Mattick J.S."/>
            <person name="Hume D.A."/>
            <person name="Kai C."/>
            <person name="Sasaki D."/>
            <person name="Tomaru Y."/>
            <person name="Fukuda S."/>
            <person name="Kanamori-Katayama M."/>
            <person name="Suzuki M."/>
            <person name="Aoki J."/>
            <person name="Arakawa T."/>
            <person name="Iida J."/>
            <person name="Imamura K."/>
            <person name="Itoh M."/>
            <person name="Kato T."/>
            <person name="Kawaji H."/>
            <person name="Kawagashira N."/>
            <person name="Kawashima T."/>
            <person name="Kojima M."/>
            <person name="Kondo S."/>
            <person name="Konno H."/>
            <person name="Nakano K."/>
            <person name="Ninomiya N."/>
            <person name="Nishio T."/>
            <person name="Okada M."/>
            <person name="Plessy C."/>
            <person name="Shibata K."/>
            <person name="Shiraki T."/>
            <person name="Suzuki S."/>
            <person name="Tagami M."/>
            <person name="Waki K."/>
            <person name="Watahiki A."/>
            <person name="Okamura-Oho Y."/>
            <person name="Suzuki H."/>
            <person name="Kawai J."/>
            <person name="Hayashizaki Y."/>
        </authorList>
    </citation>
    <scope>NUCLEOTIDE SEQUENCE [LARGE SCALE MRNA]</scope>
    <source>
        <strain>C57BL/6J</strain>
        <tissue>Brain</tissue>
    </source>
</reference>
<reference key="5">
    <citation type="journal article" date="1989" name="Mol. Endocrinol.">
        <title>Regulation of the cellular retinoid-binding proteins and their messenger ribonucleic acids during P19 embryonal carcinoma cell differentiation induced by retinoic acid.</title>
        <authorList>
            <person name="Wei L.-N."/>
            <person name="Blaner W.S."/>
            <person name="Goodman D.S."/>
            <person name="Nguyen-Huu M.C."/>
        </authorList>
    </citation>
    <scope>NUCLEOTIDE SEQUENCE [MRNA] OF 66-137</scope>
</reference>
<reference key="6">
    <citation type="journal article" date="1992" name="Proteins">
        <title>Mutating the charged residues in the binding pocket of cellular retinoic acid-binding protein simultaneously reduces its binding affinity to retinoic acid and increases its thermostability.</title>
        <authorList>
            <person name="Zhang J."/>
            <person name="Liu Z.-P."/>
            <person name="Jones A."/>
            <person name="Gierasch L.M."/>
            <person name="Sambrook J.F."/>
        </authorList>
    </citation>
    <scope>MUTAGENESIS</scope>
</reference>
<reference key="7">
    <citation type="journal article" date="2010" name="Cell">
        <title>A tissue-specific atlas of mouse protein phosphorylation and expression.</title>
        <authorList>
            <person name="Huttlin E.L."/>
            <person name="Jedrychowski M.P."/>
            <person name="Elias J.E."/>
            <person name="Goswami T."/>
            <person name="Rad R."/>
            <person name="Beausoleil S.A."/>
            <person name="Villen J."/>
            <person name="Haas W."/>
            <person name="Sowa M.E."/>
            <person name="Gygi S.P."/>
        </authorList>
    </citation>
    <scope>IDENTIFICATION BY MASS SPECTROMETRY [LARGE SCALE ANALYSIS]</scope>
    <source>
        <tissue>Lung</tissue>
        <tissue>Testis</tissue>
    </source>
</reference>
<reference key="8">
    <citation type="journal article" date="1994" name="Structure">
        <title>Crystal structures of cellular retinoic acid binding proteins I and II in complex with all-trans-retinoic acid and a synthetic retinoid.</title>
        <authorList>
            <person name="Kleywegt G.J."/>
            <person name="Bergfors T."/>
            <person name="Senn H."/>
            <person name="le Motte P."/>
            <person name="Gsell B."/>
            <person name="Shudo K."/>
            <person name="Jones T.A."/>
        </authorList>
    </citation>
    <scope>X-RAY CRYSTALLOGRAPHY (1.8 ANGSTROMS)</scope>
</reference>
<reference key="9">
    <citation type="journal article" date="1995" name="J. Mol. Biol.">
        <title>Crystal structure of cellular retinoic acid binding protein I shows increased access to the binding cavity due to formation of an intermolecular beta-sheet.</title>
        <authorList>
            <person name="Thompson J.R."/>
            <person name="Bratt J.M."/>
            <person name="Banaszak L.J."/>
        </authorList>
    </citation>
    <scope>X-RAY CRYSTALLOGRAPHY (2.7 ANGSTROMS)</scope>
</reference>
<keyword id="KW-0002">3D-structure</keyword>
<keyword id="KW-0963">Cytoplasm</keyword>
<keyword id="KW-1185">Reference proteome</keyword>
<keyword id="KW-0683">Retinol-binding</keyword>
<keyword id="KW-0813">Transport</keyword>
<keyword id="KW-0845">Vitamin A</keyword>
<feature type="chain" id="PRO_0000067407" description="Cellular retinoic acid-binding protein 1">
    <location>
        <begin position="1"/>
        <end position="137"/>
    </location>
</feature>
<feature type="short sequence motif" description="Nuclear localization signal" evidence="1">
    <location>
        <begin position="21"/>
        <end position="31"/>
    </location>
</feature>
<feature type="binding site">
    <location>
        <begin position="132"/>
        <end position="134"/>
    </location>
    <ligand>
        <name>all-trans-retinoate</name>
        <dbReference type="ChEBI" id="CHEBI:35291"/>
    </ligand>
</feature>
<feature type="strand" evidence="3">
    <location>
        <begin position="6"/>
        <end position="15"/>
    </location>
</feature>
<feature type="helix" evidence="3">
    <location>
        <begin position="16"/>
        <end position="22"/>
    </location>
</feature>
<feature type="helix" evidence="3">
    <location>
        <begin position="27"/>
        <end position="36"/>
    </location>
</feature>
<feature type="strand" evidence="3">
    <location>
        <begin position="41"/>
        <end position="47"/>
    </location>
</feature>
<feature type="strand" evidence="3">
    <location>
        <begin position="50"/>
        <end position="56"/>
    </location>
</feature>
<feature type="strand" evidence="3">
    <location>
        <begin position="61"/>
        <end position="67"/>
    </location>
</feature>
<feature type="strand" evidence="3">
    <location>
        <begin position="72"/>
        <end position="75"/>
    </location>
</feature>
<feature type="strand" evidence="3">
    <location>
        <begin position="81"/>
        <end position="90"/>
    </location>
</feature>
<feature type="strand" evidence="3">
    <location>
        <begin position="93"/>
        <end position="103"/>
    </location>
</feature>
<feature type="strand" evidence="3">
    <location>
        <begin position="108"/>
        <end position="115"/>
    </location>
</feature>
<feature type="strand" evidence="3">
    <location>
        <begin position="118"/>
        <end position="125"/>
    </location>
</feature>
<feature type="strand" evidence="3">
    <location>
        <begin position="128"/>
        <end position="136"/>
    </location>
</feature>
<dbReference type="EMBL" id="X15481">
    <property type="protein sequence ID" value="CAA33509.1"/>
    <property type="molecule type" value="mRNA"/>
</dbReference>
<dbReference type="EMBL" id="M58015">
    <property type="protein sequence ID" value="AAA40027.1"/>
    <property type="molecule type" value="Genomic_DNA"/>
</dbReference>
<dbReference type="EMBL" id="M58013">
    <property type="protein sequence ID" value="AAA40027.1"/>
    <property type="status" value="JOINED"/>
    <property type="molecule type" value="Genomic_DNA"/>
</dbReference>
<dbReference type="EMBL" id="M58014">
    <property type="protein sequence ID" value="AAA40027.1"/>
    <property type="status" value="JOINED"/>
    <property type="molecule type" value="Genomic_DNA"/>
</dbReference>
<dbReference type="EMBL" id="X51715">
    <property type="protein sequence ID" value="CAA36011.1"/>
    <property type="molecule type" value="Genomic_DNA"/>
</dbReference>
<dbReference type="EMBL" id="X51716">
    <property type="protein sequence ID" value="CAA36011.1"/>
    <property type="status" value="JOINED"/>
    <property type="molecule type" value="Genomic_DNA"/>
</dbReference>
<dbReference type="EMBL" id="X51717">
    <property type="protein sequence ID" value="CAA36011.1"/>
    <property type="status" value="JOINED"/>
    <property type="molecule type" value="Genomic_DNA"/>
</dbReference>
<dbReference type="EMBL" id="X15789">
    <property type="protein sequence ID" value="CAA33790.1"/>
    <property type="molecule type" value="mRNA"/>
</dbReference>
<dbReference type="EMBL" id="AK045283">
    <property type="protein sequence ID" value="BAC32295.1"/>
    <property type="molecule type" value="mRNA"/>
</dbReference>
<dbReference type="EMBL" id="AK144397">
    <property type="protein sequence ID" value="BAE25869.1"/>
    <property type="molecule type" value="mRNA"/>
</dbReference>
<dbReference type="EMBL" id="M31552">
    <property type="protein sequence ID" value="AAA37453.1"/>
    <property type="molecule type" value="mRNA"/>
</dbReference>
<dbReference type="CCDS" id="CCDS23195.1"/>
<dbReference type="PIR" id="A35825">
    <property type="entry name" value="A35825"/>
</dbReference>
<dbReference type="RefSeq" id="NP_038524.1">
    <property type="nucleotide sequence ID" value="NM_013496.3"/>
</dbReference>
<dbReference type="PDB" id="1CBI">
    <property type="method" value="X-ray"/>
    <property type="resolution" value="2.70 A"/>
    <property type="chains" value="A/B=2-137"/>
</dbReference>
<dbReference type="PDB" id="1CBR">
    <property type="method" value="X-ray"/>
    <property type="resolution" value="2.90 A"/>
    <property type="chains" value="A/B=2-137"/>
</dbReference>
<dbReference type="PDBsum" id="1CBI"/>
<dbReference type="PDBsum" id="1CBR"/>
<dbReference type="BMRB" id="P62965"/>
<dbReference type="SMR" id="P62965"/>
<dbReference type="BioGRID" id="198868">
    <property type="interactions" value="1"/>
</dbReference>
<dbReference type="FunCoup" id="P62965">
    <property type="interactions" value="1000"/>
</dbReference>
<dbReference type="STRING" id="10090.ENSMUSP00000034830"/>
<dbReference type="BindingDB" id="P62965"/>
<dbReference type="ChEMBL" id="CHEMBL3208"/>
<dbReference type="DrugCentral" id="P62965"/>
<dbReference type="iPTMnet" id="P62965"/>
<dbReference type="PhosphoSitePlus" id="P62965"/>
<dbReference type="SwissPalm" id="P62965"/>
<dbReference type="REPRODUCTION-2DPAGE" id="IPI00230721"/>
<dbReference type="REPRODUCTION-2DPAGE" id="P62965"/>
<dbReference type="PaxDb" id="10090-ENSMUSP00000034830"/>
<dbReference type="PeptideAtlas" id="P62965"/>
<dbReference type="ProteomicsDB" id="300293"/>
<dbReference type="Pumba" id="P62965"/>
<dbReference type="Antibodypedia" id="1541">
    <property type="antibodies" value="252 antibodies from 31 providers"/>
</dbReference>
<dbReference type="DNASU" id="12903"/>
<dbReference type="Ensembl" id="ENSMUST00000034830.9">
    <property type="protein sequence ID" value="ENSMUSP00000034830.9"/>
    <property type="gene ID" value="ENSMUSG00000032291.9"/>
</dbReference>
<dbReference type="GeneID" id="12903"/>
<dbReference type="KEGG" id="mmu:12903"/>
<dbReference type="UCSC" id="uc009prp.2">
    <property type="organism name" value="mouse"/>
</dbReference>
<dbReference type="AGR" id="MGI:88490"/>
<dbReference type="CTD" id="1381"/>
<dbReference type="MGI" id="MGI:88490">
    <property type="gene designation" value="Crabp1"/>
</dbReference>
<dbReference type="VEuPathDB" id="HostDB:ENSMUSG00000032291"/>
<dbReference type="eggNOG" id="KOG4015">
    <property type="taxonomic scope" value="Eukaryota"/>
</dbReference>
<dbReference type="GeneTree" id="ENSGT00940000159422"/>
<dbReference type="HOGENOM" id="CLU_113772_0_2_1"/>
<dbReference type="InParanoid" id="P62965"/>
<dbReference type="OMA" id="MPNFAGN"/>
<dbReference type="OrthoDB" id="195110at2759"/>
<dbReference type="PhylomeDB" id="P62965"/>
<dbReference type="TreeFam" id="TF316894"/>
<dbReference type="Reactome" id="R-MMU-5365859">
    <property type="pathway name" value="RA biosynthesis pathway"/>
</dbReference>
<dbReference type="BioGRID-ORCS" id="12903">
    <property type="hits" value="3 hits in 82 CRISPR screens"/>
</dbReference>
<dbReference type="ChiTaRS" id="Crabp1">
    <property type="organism name" value="mouse"/>
</dbReference>
<dbReference type="EvolutionaryTrace" id="P62965"/>
<dbReference type="PRO" id="PR:P62965"/>
<dbReference type="Proteomes" id="UP000000589">
    <property type="component" value="Chromosome 9"/>
</dbReference>
<dbReference type="RNAct" id="P62965">
    <property type="molecule type" value="protein"/>
</dbReference>
<dbReference type="Bgee" id="ENSMUSG00000032291">
    <property type="expression patterns" value="Expressed in otic placode and 253 other cell types or tissues"/>
</dbReference>
<dbReference type="GO" id="GO:0005737">
    <property type="term" value="C:cytoplasm"/>
    <property type="evidence" value="ECO:0000314"/>
    <property type="project" value="MGI"/>
</dbReference>
<dbReference type="GO" id="GO:0016918">
    <property type="term" value="F:retinal binding"/>
    <property type="evidence" value="ECO:0007669"/>
    <property type="project" value="UniProtKB-KW"/>
</dbReference>
<dbReference type="GO" id="GO:0005501">
    <property type="term" value="F:retinoid binding"/>
    <property type="evidence" value="ECO:0000304"/>
    <property type="project" value="MGI"/>
</dbReference>
<dbReference type="GO" id="GO:0019841">
    <property type="term" value="F:retinol binding"/>
    <property type="evidence" value="ECO:0007669"/>
    <property type="project" value="UniProtKB-KW"/>
</dbReference>
<dbReference type="CDD" id="cd19460">
    <property type="entry name" value="CRABP1"/>
    <property type="match status" value="1"/>
</dbReference>
<dbReference type="DisProt" id="DP00340"/>
<dbReference type="FunFam" id="2.40.128.20:FF:000001">
    <property type="entry name" value="Fatty acid-binding protein, adipocyte"/>
    <property type="match status" value="1"/>
</dbReference>
<dbReference type="Gene3D" id="2.40.128.20">
    <property type="match status" value="1"/>
</dbReference>
<dbReference type="InterPro" id="IPR012674">
    <property type="entry name" value="Calycin"/>
</dbReference>
<dbReference type="InterPro" id="IPR000463">
    <property type="entry name" value="Fatty_acid-bd"/>
</dbReference>
<dbReference type="InterPro" id="IPR031259">
    <property type="entry name" value="ILBP"/>
</dbReference>
<dbReference type="InterPro" id="IPR000566">
    <property type="entry name" value="Lipocln_cytosolic_FA-bd_dom"/>
</dbReference>
<dbReference type="PANTHER" id="PTHR11955">
    <property type="entry name" value="FATTY ACID BINDING PROTEIN"/>
    <property type="match status" value="1"/>
</dbReference>
<dbReference type="Pfam" id="PF00061">
    <property type="entry name" value="Lipocalin"/>
    <property type="match status" value="1"/>
</dbReference>
<dbReference type="PRINTS" id="PR00178">
    <property type="entry name" value="FATTYACIDBP"/>
</dbReference>
<dbReference type="SUPFAM" id="SSF50814">
    <property type="entry name" value="Lipocalins"/>
    <property type="match status" value="1"/>
</dbReference>
<dbReference type="PROSITE" id="PS00214">
    <property type="entry name" value="FABP"/>
    <property type="match status" value="1"/>
</dbReference>
<proteinExistence type="evidence at protein level"/>
<organism>
    <name type="scientific">Mus musculus</name>
    <name type="common">Mouse</name>
    <dbReference type="NCBI Taxonomy" id="10090"/>
    <lineage>
        <taxon>Eukaryota</taxon>
        <taxon>Metazoa</taxon>
        <taxon>Chordata</taxon>
        <taxon>Craniata</taxon>
        <taxon>Vertebrata</taxon>
        <taxon>Euteleostomi</taxon>
        <taxon>Mammalia</taxon>
        <taxon>Eutheria</taxon>
        <taxon>Euarchontoglires</taxon>
        <taxon>Glires</taxon>
        <taxon>Rodentia</taxon>
        <taxon>Myomorpha</taxon>
        <taxon>Muroidea</taxon>
        <taxon>Muridae</taxon>
        <taxon>Murinae</taxon>
        <taxon>Mus</taxon>
        <taxon>Mus</taxon>
    </lineage>
</organism>
<sequence>MPNFAGTWKMRSSENFDELLKALGVNAMLRKVAVAAASKPHVEIRQDGDQFYIKTSTTVRTTEINFKVGEGFEEETVDGRKCRSLPTWENENKIHCTQTLLEGDGPKTYWTRELANDELILTFGADDVVCTRIYVRE</sequence>
<name>RABP1_MOUSE</name>
<evidence type="ECO:0000250" key="1"/>
<evidence type="ECO:0000305" key="2"/>
<evidence type="ECO:0007829" key="3">
    <source>
        <dbReference type="PDB" id="1CBI"/>
    </source>
</evidence>
<protein>
    <recommendedName>
        <fullName>Cellular retinoic acid-binding protein 1</fullName>
    </recommendedName>
    <alternativeName>
        <fullName>Cellular retinoic acid-binding protein I</fullName>
        <shortName>CRABP-I</shortName>
    </alternativeName>
</protein>